<feature type="chain" id="PRO_0000188022" description="DNA repair protein RecN">
    <location>
        <begin position="1"/>
        <end position="587"/>
    </location>
</feature>
<feature type="binding site" evidence="2">
    <location>
        <begin position="29"/>
        <end position="36"/>
    </location>
    <ligand>
        <name>ATP</name>
        <dbReference type="ChEBI" id="CHEBI:30616"/>
    </ligand>
</feature>
<accession>P9WHI7</accession>
<accession>L0T7E7</accession>
<accession>O33197</accession>
<accession>P0A5U6</accession>
<reference key="1">
    <citation type="journal article" date="1998" name="Nature">
        <title>Deciphering the biology of Mycobacterium tuberculosis from the complete genome sequence.</title>
        <authorList>
            <person name="Cole S.T."/>
            <person name="Brosch R."/>
            <person name="Parkhill J."/>
            <person name="Garnier T."/>
            <person name="Churcher C.M."/>
            <person name="Harris D.E."/>
            <person name="Gordon S.V."/>
            <person name="Eiglmeier K."/>
            <person name="Gas S."/>
            <person name="Barry C.E. III"/>
            <person name="Tekaia F."/>
            <person name="Badcock K."/>
            <person name="Basham D."/>
            <person name="Brown D."/>
            <person name="Chillingworth T."/>
            <person name="Connor R."/>
            <person name="Davies R.M."/>
            <person name="Devlin K."/>
            <person name="Feltwell T."/>
            <person name="Gentles S."/>
            <person name="Hamlin N."/>
            <person name="Holroyd S."/>
            <person name="Hornsby T."/>
            <person name="Jagels K."/>
            <person name="Krogh A."/>
            <person name="McLean J."/>
            <person name="Moule S."/>
            <person name="Murphy L.D."/>
            <person name="Oliver S."/>
            <person name="Osborne J."/>
            <person name="Quail M.A."/>
            <person name="Rajandream M.A."/>
            <person name="Rogers J."/>
            <person name="Rutter S."/>
            <person name="Seeger K."/>
            <person name="Skelton S."/>
            <person name="Squares S."/>
            <person name="Squares R."/>
            <person name="Sulston J.E."/>
            <person name="Taylor K."/>
            <person name="Whitehead S."/>
            <person name="Barrell B.G."/>
        </authorList>
    </citation>
    <scope>NUCLEOTIDE SEQUENCE [LARGE SCALE GENOMIC DNA]</scope>
    <source>
        <strain>ATCC 25618 / H37Rv</strain>
    </source>
</reference>
<reference key="2">
    <citation type="journal article" date="2011" name="Mol. Cell. Proteomics">
        <title>Proteogenomic analysis of Mycobacterium tuberculosis by high resolution mass spectrometry.</title>
        <authorList>
            <person name="Kelkar D.S."/>
            <person name="Kumar D."/>
            <person name="Kumar P."/>
            <person name="Balakrishnan L."/>
            <person name="Muthusamy B."/>
            <person name="Yadav A.K."/>
            <person name="Shrivastava P."/>
            <person name="Marimuthu A."/>
            <person name="Anand S."/>
            <person name="Sundaram H."/>
            <person name="Kingsbury R."/>
            <person name="Harsha H.C."/>
            <person name="Nair B."/>
            <person name="Prasad T.S."/>
            <person name="Chauhan D.S."/>
            <person name="Katoch K."/>
            <person name="Katoch V.M."/>
            <person name="Kumar P."/>
            <person name="Chaerkady R."/>
            <person name="Ramachandran S."/>
            <person name="Dash D."/>
            <person name="Pandey A."/>
        </authorList>
    </citation>
    <scope>IDENTIFICATION BY MASS SPECTROMETRY [LARGE SCALE ANALYSIS]</scope>
    <source>
        <strain>ATCC 25618 / H37Rv</strain>
    </source>
</reference>
<dbReference type="EMBL" id="AL123456">
    <property type="protein sequence ID" value="CCP44461.1"/>
    <property type="molecule type" value="Genomic_DNA"/>
</dbReference>
<dbReference type="PIR" id="G70502">
    <property type="entry name" value="G70502"/>
</dbReference>
<dbReference type="RefSeq" id="NP_216212.1">
    <property type="nucleotide sequence ID" value="NC_000962.3"/>
</dbReference>
<dbReference type="RefSeq" id="WP_003408385.1">
    <property type="nucleotide sequence ID" value="NZ_NVQJ01000010.1"/>
</dbReference>
<dbReference type="SMR" id="P9WHI7"/>
<dbReference type="FunCoup" id="P9WHI7">
    <property type="interactions" value="48"/>
</dbReference>
<dbReference type="STRING" id="83332.Rv1696"/>
<dbReference type="PaxDb" id="83332-Rv1696"/>
<dbReference type="DNASU" id="885805"/>
<dbReference type="GeneID" id="45425665"/>
<dbReference type="GeneID" id="885805"/>
<dbReference type="KEGG" id="mtu:Rv1696"/>
<dbReference type="KEGG" id="mtv:RVBD_1696"/>
<dbReference type="TubercuList" id="Rv1696"/>
<dbReference type="eggNOG" id="COG0497">
    <property type="taxonomic scope" value="Bacteria"/>
</dbReference>
<dbReference type="InParanoid" id="P9WHI7"/>
<dbReference type="OrthoDB" id="9806954at2"/>
<dbReference type="PhylomeDB" id="P9WHI7"/>
<dbReference type="Proteomes" id="UP000001584">
    <property type="component" value="Chromosome"/>
</dbReference>
<dbReference type="GO" id="GO:0043590">
    <property type="term" value="C:bacterial nucleoid"/>
    <property type="evidence" value="ECO:0000318"/>
    <property type="project" value="GO_Central"/>
</dbReference>
<dbReference type="GO" id="GO:0009274">
    <property type="term" value="C:peptidoglycan-based cell wall"/>
    <property type="evidence" value="ECO:0007005"/>
    <property type="project" value="MTBBASE"/>
</dbReference>
<dbReference type="GO" id="GO:0005524">
    <property type="term" value="F:ATP binding"/>
    <property type="evidence" value="ECO:0007669"/>
    <property type="project" value="UniProtKB-KW"/>
</dbReference>
<dbReference type="GO" id="GO:0006310">
    <property type="term" value="P:DNA recombination"/>
    <property type="evidence" value="ECO:0007669"/>
    <property type="project" value="InterPro"/>
</dbReference>
<dbReference type="GO" id="GO:0006281">
    <property type="term" value="P:DNA repair"/>
    <property type="evidence" value="ECO:0007669"/>
    <property type="project" value="UniProtKB-KW"/>
</dbReference>
<dbReference type="GO" id="GO:0009432">
    <property type="term" value="P:SOS response"/>
    <property type="evidence" value="ECO:0000318"/>
    <property type="project" value="GO_Central"/>
</dbReference>
<dbReference type="CDD" id="cd03241">
    <property type="entry name" value="ABC_RecN"/>
    <property type="match status" value="2"/>
</dbReference>
<dbReference type="FunFam" id="3.40.50.300:FF:000319">
    <property type="entry name" value="DNA repair protein RecN"/>
    <property type="match status" value="1"/>
</dbReference>
<dbReference type="FunFam" id="3.40.50.300:FF:000356">
    <property type="entry name" value="DNA repair protein RecN"/>
    <property type="match status" value="1"/>
</dbReference>
<dbReference type="Gene3D" id="3.40.50.300">
    <property type="entry name" value="P-loop containing nucleotide triphosphate hydrolases"/>
    <property type="match status" value="2"/>
</dbReference>
<dbReference type="InterPro" id="IPR004604">
    <property type="entry name" value="DNA_recomb/repair_RecN"/>
</dbReference>
<dbReference type="InterPro" id="IPR027417">
    <property type="entry name" value="P-loop_NTPase"/>
</dbReference>
<dbReference type="InterPro" id="IPR003395">
    <property type="entry name" value="RecF/RecN/SMC_N"/>
</dbReference>
<dbReference type="NCBIfam" id="TIGR00634">
    <property type="entry name" value="recN"/>
    <property type="match status" value="1"/>
</dbReference>
<dbReference type="PANTHER" id="PTHR11059">
    <property type="entry name" value="DNA REPAIR PROTEIN RECN"/>
    <property type="match status" value="1"/>
</dbReference>
<dbReference type="PANTHER" id="PTHR11059:SF0">
    <property type="entry name" value="DNA REPAIR PROTEIN RECN"/>
    <property type="match status" value="1"/>
</dbReference>
<dbReference type="Pfam" id="PF02463">
    <property type="entry name" value="SMC_N"/>
    <property type="match status" value="1"/>
</dbReference>
<dbReference type="PIRSF" id="PIRSF003128">
    <property type="entry name" value="RecN"/>
    <property type="match status" value="1"/>
</dbReference>
<dbReference type="SUPFAM" id="SSF52540">
    <property type="entry name" value="P-loop containing nucleoside triphosphate hydrolases"/>
    <property type="match status" value="2"/>
</dbReference>
<sequence length="587" mass="62229">MLTELRIESLGAISVATAEFDRGFTVLTGETGTGKTMVVTGLHLLGGARADATRVRSGADRAVVEGRFTTTDLDDATVAGLQAVLDSSGAERDEDGSVIALRSISRDGPSRAYLGGRGVPAKSLSGFTNELLTLHGQNDQLRLMRPDEQRGALDRFAAAGEAVQRYRKLRDAWLTARRDLVDRRNRARELAQEADRLKFALNEIDTVDPQPGEDVALVADIARLSELDTLREAATTARATLCGTPDADAFDRGAVDSLGRARAALQSSDDAALRGLAEQVGEALTVVVDAVAELGAYLDELPADASALDAKLARQAQLRTLTRKYAADIDGVLRWADEARARLAQLDVSEEGLAALERRTGELAHELGQAAVDLSTIRRKAAKRLAKEVSAELSALAMADAEFTIGVTTELADHGDPVALALASGELARAGADGVDAVEFGFVAHRGMTVLPLAKSASGGELSRVMLSLEVVLATSRKQAAGTTMVFDEIDAGVGGWAAVQIGRRLARLARTHQVIVVTHLPQVAAYADVHLMVQRTGRDGASGVRRLTSEDRVAELARMLAGLGDSDSGRAHARELLETAQNDELT</sequence>
<proteinExistence type="evidence at protein level"/>
<comment type="function">
    <text evidence="1">May be involved in recombinational repair of damaged DNA.</text>
</comment>
<comment type="similarity">
    <text evidence="3">Belongs to the RecN family.</text>
</comment>
<protein>
    <recommendedName>
        <fullName>DNA repair protein RecN</fullName>
    </recommendedName>
    <alternativeName>
        <fullName>Recombination protein N</fullName>
    </alternativeName>
</protein>
<keyword id="KW-0067">ATP-binding</keyword>
<keyword id="KW-0227">DNA damage</keyword>
<keyword id="KW-0234">DNA repair</keyword>
<keyword id="KW-0547">Nucleotide-binding</keyword>
<keyword id="KW-1185">Reference proteome</keyword>
<evidence type="ECO:0000250" key="1"/>
<evidence type="ECO:0000255" key="2"/>
<evidence type="ECO:0000305" key="3"/>
<organism>
    <name type="scientific">Mycobacterium tuberculosis (strain ATCC 25618 / H37Rv)</name>
    <dbReference type="NCBI Taxonomy" id="83332"/>
    <lineage>
        <taxon>Bacteria</taxon>
        <taxon>Bacillati</taxon>
        <taxon>Actinomycetota</taxon>
        <taxon>Actinomycetes</taxon>
        <taxon>Mycobacteriales</taxon>
        <taxon>Mycobacteriaceae</taxon>
        <taxon>Mycobacterium</taxon>
        <taxon>Mycobacterium tuberculosis complex</taxon>
    </lineage>
</organism>
<name>RECN_MYCTU</name>
<gene>
    <name type="primary">recN</name>
    <name type="ordered locus">Rv1696</name>
    <name type="ORF">MTCI125.18</name>
</gene>